<keyword id="KW-0067">ATP-binding</keyword>
<keyword id="KW-0143">Chaperone</keyword>
<keyword id="KW-0256">Endoplasmic reticulum</keyword>
<keyword id="KW-0325">Glycoprotein</keyword>
<keyword id="KW-0358">Heparin-binding</keyword>
<keyword id="KW-0547">Nucleotide-binding</keyword>
<keyword id="KW-0732">Signal</keyword>
<reference evidence="11" key="1">
    <citation type="journal article" date="2002" name="EMBO J.">
        <title>Leishmania LPG3 encodes a GRP94 homolog required for phosphoglycan synthesis implicated in parasite virulence but not viability.</title>
        <authorList>
            <person name="Descoteaux A."/>
            <person name="Avila H.A."/>
            <person name="Zhang K."/>
            <person name="Turco S.J."/>
            <person name="Beverley S.M."/>
        </authorList>
    </citation>
    <scope>NUCLEOTIDE SEQUENCE [GENOMIC DNA]</scope>
    <scope>FUNCTION</scope>
    <scope>SUBCELLULAR LOCATION</scope>
    <scope>DEVELOPMENTAL STAGE</scope>
    <scope>INDUCTION</scope>
    <scope>DISRUPTION PHENOTYPE</scope>
    <scope>MUTAGENESIS OF GLY-159</scope>
    <source>
        <strain evidence="8">MHOM/SD/62/1S</strain>
    </source>
</reference>
<organism evidence="11">
    <name type="scientific">Leishmania donovani</name>
    <dbReference type="NCBI Taxonomy" id="5661"/>
    <lineage>
        <taxon>Eukaryota</taxon>
        <taxon>Discoba</taxon>
        <taxon>Euglenozoa</taxon>
        <taxon>Kinetoplastea</taxon>
        <taxon>Metakinetoplastina</taxon>
        <taxon>Trypanosomatida</taxon>
        <taxon>Trypanosomatidae</taxon>
        <taxon>Leishmaniinae</taxon>
        <taxon>Leishmania</taxon>
    </lineage>
</organism>
<dbReference type="EMBL" id="AF369892">
    <property type="protein sequence ID" value="AAM00390.1"/>
    <property type="molecule type" value="Genomic_DNA"/>
</dbReference>
<dbReference type="SMR" id="Q8T7E0"/>
<dbReference type="GlyCosmos" id="Q8T7E0">
    <property type="glycosylation" value="3 sites, No reported glycans"/>
</dbReference>
<dbReference type="VEuPathDB" id="TriTrypDB:LdBPK_290790.1"/>
<dbReference type="VEuPathDB" id="TriTrypDB:LdCL_290012700"/>
<dbReference type="VEuPathDB" id="TriTrypDB:LDHU3_29.1080"/>
<dbReference type="GO" id="GO:0005783">
    <property type="term" value="C:endoplasmic reticulum"/>
    <property type="evidence" value="ECO:0007669"/>
    <property type="project" value="UniProtKB-SubCell"/>
</dbReference>
<dbReference type="GO" id="GO:0005524">
    <property type="term" value="F:ATP binding"/>
    <property type="evidence" value="ECO:0007669"/>
    <property type="project" value="UniProtKB-KW"/>
</dbReference>
<dbReference type="GO" id="GO:0016887">
    <property type="term" value="F:ATP hydrolysis activity"/>
    <property type="evidence" value="ECO:0007669"/>
    <property type="project" value="InterPro"/>
</dbReference>
<dbReference type="GO" id="GO:0140662">
    <property type="term" value="F:ATP-dependent protein folding chaperone"/>
    <property type="evidence" value="ECO:0007669"/>
    <property type="project" value="InterPro"/>
</dbReference>
<dbReference type="GO" id="GO:0008201">
    <property type="term" value="F:heparin binding"/>
    <property type="evidence" value="ECO:0007669"/>
    <property type="project" value="UniProtKB-KW"/>
</dbReference>
<dbReference type="GO" id="GO:0051082">
    <property type="term" value="F:unfolded protein binding"/>
    <property type="evidence" value="ECO:0007669"/>
    <property type="project" value="InterPro"/>
</dbReference>
<dbReference type="CDD" id="cd16927">
    <property type="entry name" value="HATPase_Hsp90-like"/>
    <property type="match status" value="1"/>
</dbReference>
<dbReference type="FunFam" id="3.30.565.10:FF:000054">
    <property type="entry name" value="Heat shock protein 90"/>
    <property type="match status" value="1"/>
</dbReference>
<dbReference type="FunFam" id="3.40.50.11260:FF:000005">
    <property type="entry name" value="Heat shock protein 90"/>
    <property type="match status" value="1"/>
</dbReference>
<dbReference type="FunFam" id="3.30.230.80:FF:000014">
    <property type="entry name" value="Lipophosphoglycan biosynthetic protein, putative"/>
    <property type="match status" value="1"/>
</dbReference>
<dbReference type="Gene3D" id="3.30.230.80">
    <property type="match status" value="1"/>
</dbReference>
<dbReference type="Gene3D" id="3.40.50.11260">
    <property type="match status" value="1"/>
</dbReference>
<dbReference type="Gene3D" id="1.20.120.790">
    <property type="entry name" value="Heat shock protein 90, C-terminal domain"/>
    <property type="match status" value="1"/>
</dbReference>
<dbReference type="Gene3D" id="3.30.565.10">
    <property type="entry name" value="Histidine kinase-like ATPase, C-terminal domain"/>
    <property type="match status" value="1"/>
</dbReference>
<dbReference type="HAMAP" id="MF_00505">
    <property type="entry name" value="HSP90"/>
    <property type="match status" value="1"/>
</dbReference>
<dbReference type="InterPro" id="IPR036890">
    <property type="entry name" value="HATPase_C_sf"/>
</dbReference>
<dbReference type="InterPro" id="IPR037196">
    <property type="entry name" value="HSP90_C"/>
</dbReference>
<dbReference type="InterPro" id="IPR001404">
    <property type="entry name" value="Hsp90_fam"/>
</dbReference>
<dbReference type="InterPro" id="IPR020575">
    <property type="entry name" value="Hsp90_N"/>
</dbReference>
<dbReference type="InterPro" id="IPR020568">
    <property type="entry name" value="Ribosomal_Su5_D2-typ_SF"/>
</dbReference>
<dbReference type="NCBIfam" id="NF003555">
    <property type="entry name" value="PRK05218.1"/>
    <property type="match status" value="1"/>
</dbReference>
<dbReference type="PANTHER" id="PTHR11528">
    <property type="entry name" value="HEAT SHOCK PROTEIN 90 FAMILY MEMBER"/>
    <property type="match status" value="1"/>
</dbReference>
<dbReference type="Pfam" id="PF13589">
    <property type="entry name" value="HATPase_c_3"/>
    <property type="match status" value="1"/>
</dbReference>
<dbReference type="Pfam" id="PF00183">
    <property type="entry name" value="HSP90"/>
    <property type="match status" value="1"/>
</dbReference>
<dbReference type="PIRSF" id="PIRSF002583">
    <property type="entry name" value="Hsp90"/>
    <property type="match status" value="1"/>
</dbReference>
<dbReference type="PRINTS" id="PR00775">
    <property type="entry name" value="HEATSHOCK90"/>
</dbReference>
<dbReference type="SUPFAM" id="SSF55874">
    <property type="entry name" value="ATPase domain of HSP90 chaperone/DNA topoisomerase II/histidine kinase"/>
    <property type="match status" value="1"/>
</dbReference>
<dbReference type="SUPFAM" id="SSF110942">
    <property type="entry name" value="HSP90 C-terminal domain"/>
    <property type="match status" value="1"/>
</dbReference>
<dbReference type="SUPFAM" id="SSF54211">
    <property type="entry name" value="Ribosomal protein S5 domain 2-like"/>
    <property type="match status" value="1"/>
</dbReference>
<comment type="function">
    <text evidence="1 3 7">Molecular chaperone that functions in the processing and transport of secreted proteins (By similarity). Required for the synthesis of lipophosphoglycan (LPG), a cell surface glycoconjugate (PubMed:12198148). Necessary for the attachment of the galactosyl residue to the mannose within the phosphoglycan repeats of the nascent LPG chain (PubMed:12198148). Also required for addition of phosphoglycan to acid phosphatase (PubMed:12198148). Not required for normal growth (PubMed:12198148). Has ATPase activity (By similarity). Binds heparin with micromolar affinity which may facilitate infection of host cells (By similarity).</text>
</comment>
<comment type="subunit">
    <text evidence="3">Homotetramer.</text>
</comment>
<comment type="subcellular location">
    <subcellularLocation>
        <location evidence="7">Endoplasmic reticulum</location>
    </subcellularLocation>
</comment>
<comment type="developmental stage">
    <text evidence="7">Expressed throughout the life cycle with lower expression in stationary phase promastigotes and higher levels in amastigotes.</text>
</comment>
<comment type="induction">
    <text evidence="7">Not induced by stress conditions such as heat, glucose deprivation or treatment with the glycosylation inhibitor tunicamycin.</text>
</comment>
<comment type="disruption phenotype">
    <text evidence="7">Defective lipophosphoglycan synthesis and reduced levels of the surface glycoproteins gp46 and gp63.</text>
</comment>
<comment type="similarity">
    <text evidence="9">Belongs to the heat shock protein 90 family.</text>
</comment>
<accession>Q8T7E0</accession>
<feature type="signal peptide" evidence="4">
    <location>
        <begin position="1"/>
        <end position="24"/>
    </location>
</feature>
<feature type="chain" id="PRO_5004316334" description="Endoplasmin homolog" evidence="4">
    <location>
        <begin position="25"/>
        <end position="771"/>
    </location>
</feature>
<feature type="region of interest" description="Disordered" evidence="6">
    <location>
        <begin position="254"/>
        <end position="282"/>
    </location>
</feature>
<feature type="region of interest" description="Disordered" evidence="6">
    <location>
        <begin position="727"/>
        <end position="771"/>
    </location>
</feature>
<feature type="short sequence motif" description="Prevents secretion from ER" evidence="10">
    <location>
        <begin position="768"/>
        <end position="771"/>
    </location>
</feature>
<feature type="compositionally biased region" description="Basic and acidic residues" evidence="6">
    <location>
        <begin position="752"/>
        <end position="762"/>
    </location>
</feature>
<feature type="binding site" evidence="2">
    <location>
        <position position="63"/>
    </location>
    <ligand>
        <name>ATP</name>
        <dbReference type="ChEBI" id="CHEBI:30616"/>
    </ligand>
</feature>
<feature type="binding site" evidence="2">
    <location>
        <position position="109"/>
    </location>
    <ligand>
        <name>ATP</name>
        <dbReference type="ChEBI" id="CHEBI:30616"/>
    </ligand>
</feature>
<feature type="binding site" evidence="2">
    <location>
        <position position="160"/>
    </location>
    <ligand>
        <name>ATP</name>
        <dbReference type="ChEBI" id="CHEBI:30616"/>
    </ligand>
</feature>
<feature type="site" description="Important for ATP hydrolysis" evidence="2">
    <location>
        <position position="405"/>
    </location>
</feature>
<feature type="glycosylation site" description="N-linked (GlcNAc...) asparagine" evidence="5">
    <location>
        <position position="63"/>
    </location>
</feature>
<feature type="glycosylation site" description="N-linked (GlcNAc...) asparagine" evidence="5">
    <location>
        <position position="306"/>
    </location>
</feature>
<feature type="glycosylation site" description="N-linked (GlcNAc...) asparagine" evidence="5">
    <location>
        <position position="402"/>
    </location>
</feature>
<feature type="mutagenesis site" description="In OB1; defective lipophosphoglycan (LPG) synthesis with production of a truncated LPG form lacking phosphoglycan repeats; defective addition of phosphoglycan to acid phosphatase." evidence="7">
    <original>G</original>
    <variation>D</variation>
    <location>
        <position position="159"/>
    </location>
</feature>
<evidence type="ECO:0000250" key="1">
    <source>
        <dbReference type="UniProtKB" id="P08113"/>
    </source>
</evidence>
<evidence type="ECO:0000250" key="2">
    <source>
        <dbReference type="UniProtKB" id="P41148"/>
    </source>
</evidence>
<evidence type="ECO:0000250" key="3">
    <source>
        <dbReference type="UniProtKB" id="Q9NGD0"/>
    </source>
</evidence>
<evidence type="ECO:0000255" key="4"/>
<evidence type="ECO:0000255" key="5">
    <source>
        <dbReference type="PROSITE-ProRule" id="PRU00498"/>
    </source>
</evidence>
<evidence type="ECO:0000256" key="6">
    <source>
        <dbReference type="SAM" id="MobiDB-lite"/>
    </source>
</evidence>
<evidence type="ECO:0000269" key="7">
    <source>
    </source>
</evidence>
<evidence type="ECO:0000303" key="8">
    <source>
    </source>
</evidence>
<evidence type="ECO:0000305" key="9"/>
<evidence type="ECO:0000305" key="10">
    <source>
    </source>
</evidence>
<evidence type="ECO:0000312" key="11">
    <source>
        <dbReference type="EMBL" id="AAM00390.1"/>
    </source>
</evidence>
<protein>
    <recommendedName>
        <fullName evidence="9">Endoplasmin homolog</fullName>
    </recommendedName>
    <alternativeName>
        <fullName evidence="8">Glucose-regulated protein 94</fullName>
    </alternativeName>
    <alternativeName>
        <fullName evidence="8">Lipophosphoglycan biosynthetic protein 3</fullName>
    </alternativeName>
</protein>
<proteinExistence type="evidence at protein level"/>
<gene>
    <name evidence="8" type="primary">LPG3</name>
    <name evidence="8" type="synonym">GRP94</name>
</gene>
<name>ENPL_LEIDO</name>
<sequence length="771" mass="86938">MANSSLLRVVLVALLLLGSVTVSAGDGRGTPIAFQAEVSKMLDILVNSLYTNRAVFLRELISNGSDALDKIRVLYLTSPKEPLTKDGEAPTMDLRISFDKEKSELILRDGGVGMTKEELAKHLGSLGTSGTKHFLEKLQEGVGAVGGDQNNLIGQFGVGFYSVFLVGDRVRVASKSDDSDEQYVWESKGDGQYFLYPDPRGNTLGRGTEITIELKPDAEQFLSAETIKKTIHQYSEFINFPIYVQEEVEVASTAATPESAAEERSLDEGAVEEDPDKEGDTQGVVKEKRWTLVNENRPIWTRPIGNVTEEEYHKFYKAFSGDYRDPLYFNHFKVEGEVDFDSILFVPTTVDPASFSDDNAVPNTNIKLYVRRVFITDEFRDLLPRYLNFVKGIVDSNDLPLNVSREVLQESRILRVIKKKLVRKTLSMFADIAAQDEAIANGKQVENPAPSGHTHLKKPAYTKFWELYGKHLRLGVMLDSNNRNRLTKLFRYKSSRSESEYISLQTYVDRMKKGQKGIYYLSGDSVARIKKSPVLEDAVNHDVEVIFMTDAIDEYVVSQLTDFAGKKLINLAKEGVQFEESDARQRVVDRKRKEKYDSFFTHLRALFGYSEVRKVILTKRMTNEAFIVSSSENQITARLASIMRGQSMSLANQQLTAERVLEVNYRHPLVDEMFKRFTVDEDDEVATDIAWVLYDTANLQAEFPVADVAAYSKRINRLLRSSVDLSADDSLLPPDDAEYTVSDTETEEEEEQPKVDTNAHEEAETDGEGDL</sequence>